<reference key="1">
    <citation type="journal article" date="2006" name="Arterioscler. Thromb. Vasc. Biol.">
        <title>Isolation and characterization of vasohibin-2 as a homologue of VEGF-inducible endothelium-derived angiogenesis inhibitor vasohibin.</title>
        <authorList>
            <person name="Shibuya T."/>
            <person name="Watanabe K."/>
            <person name="Yamashita H."/>
            <person name="Shimizu K."/>
            <person name="Miyashita H."/>
            <person name="Abe M."/>
            <person name="Moriya T."/>
            <person name="Ohta H."/>
            <person name="Sonoda H."/>
            <person name="Shimosegawa T."/>
            <person name="Tabayashi K."/>
            <person name="Sato Y."/>
        </authorList>
    </citation>
    <scope>NUCLEOTIDE SEQUENCE [MRNA] (ISOFORM 1)</scope>
    <scope>DEVELOPMENTAL STAGE</scope>
    <scope>INDUCTION</scope>
</reference>
<reference key="2">
    <citation type="journal article" date="2004" name="Nat. Genet.">
        <title>Complete sequencing and characterization of 21,243 full-length human cDNAs.</title>
        <authorList>
            <person name="Ota T."/>
            <person name="Suzuki Y."/>
            <person name="Nishikawa T."/>
            <person name="Otsuki T."/>
            <person name="Sugiyama T."/>
            <person name="Irie R."/>
            <person name="Wakamatsu A."/>
            <person name="Hayashi K."/>
            <person name="Sato H."/>
            <person name="Nagai K."/>
            <person name="Kimura K."/>
            <person name="Makita H."/>
            <person name="Sekine M."/>
            <person name="Obayashi M."/>
            <person name="Nishi T."/>
            <person name="Shibahara T."/>
            <person name="Tanaka T."/>
            <person name="Ishii S."/>
            <person name="Yamamoto J."/>
            <person name="Saito K."/>
            <person name="Kawai Y."/>
            <person name="Isono Y."/>
            <person name="Nakamura Y."/>
            <person name="Nagahari K."/>
            <person name="Murakami K."/>
            <person name="Yasuda T."/>
            <person name="Iwayanagi T."/>
            <person name="Wagatsuma M."/>
            <person name="Shiratori A."/>
            <person name="Sudo H."/>
            <person name="Hosoiri T."/>
            <person name="Kaku Y."/>
            <person name="Kodaira H."/>
            <person name="Kondo H."/>
            <person name="Sugawara M."/>
            <person name="Takahashi M."/>
            <person name="Kanda K."/>
            <person name="Yokoi T."/>
            <person name="Furuya T."/>
            <person name="Kikkawa E."/>
            <person name="Omura Y."/>
            <person name="Abe K."/>
            <person name="Kamihara K."/>
            <person name="Katsuta N."/>
            <person name="Sato K."/>
            <person name="Tanikawa M."/>
            <person name="Yamazaki M."/>
            <person name="Ninomiya K."/>
            <person name="Ishibashi T."/>
            <person name="Yamashita H."/>
            <person name="Murakawa K."/>
            <person name="Fujimori K."/>
            <person name="Tanai H."/>
            <person name="Kimata M."/>
            <person name="Watanabe M."/>
            <person name="Hiraoka S."/>
            <person name="Chiba Y."/>
            <person name="Ishida S."/>
            <person name="Ono Y."/>
            <person name="Takiguchi S."/>
            <person name="Watanabe S."/>
            <person name="Yosida M."/>
            <person name="Hotuta T."/>
            <person name="Kusano J."/>
            <person name="Kanehori K."/>
            <person name="Takahashi-Fujii A."/>
            <person name="Hara H."/>
            <person name="Tanase T.-O."/>
            <person name="Nomura Y."/>
            <person name="Togiya S."/>
            <person name="Komai F."/>
            <person name="Hara R."/>
            <person name="Takeuchi K."/>
            <person name="Arita M."/>
            <person name="Imose N."/>
            <person name="Musashino K."/>
            <person name="Yuuki H."/>
            <person name="Oshima A."/>
            <person name="Sasaki N."/>
            <person name="Aotsuka S."/>
            <person name="Yoshikawa Y."/>
            <person name="Matsunawa H."/>
            <person name="Ichihara T."/>
            <person name="Shiohata N."/>
            <person name="Sano S."/>
            <person name="Moriya S."/>
            <person name="Momiyama H."/>
            <person name="Satoh N."/>
            <person name="Takami S."/>
            <person name="Terashima Y."/>
            <person name="Suzuki O."/>
            <person name="Nakagawa S."/>
            <person name="Senoh A."/>
            <person name="Mizoguchi H."/>
            <person name="Goto Y."/>
            <person name="Shimizu F."/>
            <person name="Wakebe H."/>
            <person name="Hishigaki H."/>
            <person name="Watanabe T."/>
            <person name="Sugiyama A."/>
            <person name="Takemoto M."/>
            <person name="Kawakami B."/>
            <person name="Yamazaki M."/>
            <person name="Watanabe K."/>
            <person name="Kumagai A."/>
            <person name="Itakura S."/>
            <person name="Fukuzumi Y."/>
            <person name="Fujimori Y."/>
            <person name="Komiyama M."/>
            <person name="Tashiro H."/>
            <person name="Tanigami A."/>
            <person name="Fujiwara T."/>
            <person name="Ono T."/>
            <person name="Yamada K."/>
            <person name="Fujii Y."/>
            <person name="Ozaki K."/>
            <person name="Hirao M."/>
            <person name="Ohmori Y."/>
            <person name="Kawabata A."/>
            <person name="Hikiji T."/>
            <person name="Kobatake N."/>
            <person name="Inagaki H."/>
            <person name="Ikema Y."/>
            <person name="Okamoto S."/>
            <person name="Okitani R."/>
            <person name="Kawakami T."/>
            <person name="Noguchi S."/>
            <person name="Itoh T."/>
            <person name="Shigeta K."/>
            <person name="Senba T."/>
            <person name="Matsumura K."/>
            <person name="Nakajima Y."/>
            <person name="Mizuno T."/>
            <person name="Morinaga M."/>
            <person name="Sasaki M."/>
            <person name="Togashi T."/>
            <person name="Oyama M."/>
            <person name="Hata H."/>
            <person name="Watanabe M."/>
            <person name="Komatsu T."/>
            <person name="Mizushima-Sugano J."/>
            <person name="Satoh T."/>
            <person name="Shirai Y."/>
            <person name="Takahashi Y."/>
            <person name="Nakagawa K."/>
            <person name="Okumura K."/>
            <person name="Nagase T."/>
            <person name="Nomura N."/>
            <person name="Kikuchi H."/>
            <person name="Masuho Y."/>
            <person name="Yamashita R."/>
            <person name="Nakai K."/>
            <person name="Yada T."/>
            <person name="Nakamura Y."/>
            <person name="Ohara O."/>
            <person name="Isogai T."/>
            <person name="Sugano S."/>
        </authorList>
    </citation>
    <scope>NUCLEOTIDE SEQUENCE [LARGE SCALE MRNA] (ISOFORMS 2 AND 6)</scope>
    <source>
        <tissue>Teratocarcinoma</tissue>
    </source>
</reference>
<reference key="3">
    <citation type="journal article" date="2006" name="Nature">
        <title>The DNA sequence and biological annotation of human chromosome 1.</title>
        <authorList>
            <person name="Gregory S.G."/>
            <person name="Barlow K.F."/>
            <person name="McLay K.E."/>
            <person name="Kaul R."/>
            <person name="Swarbreck D."/>
            <person name="Dunham A."/>
            <person name="Scott C.E."/>
            <person name="Howe K.L."/>
            <person name="Woodfine K."/>
            <person name="Spencer C.C.A."/>
            <person name="Jones M.C."/>
            <person name="Gillson C."/>
            <person name="Searle S."/>
            <person name="Zhou Y."/>
            <person name="Kokocinski F."/>
            <person name="McDonald L."/>
            <person name="Evans R."/>
            <person name="Phillips K."/>
            <person name="Atkinson A."/>
            <person name="Cooper R."/>
            <person name="Jones C."/>
            <person name="Hall R.E."/>
            <person name="Andrews T.D."/>
            <person name="Lloyd C."/>
            <person name="Ainscough R."/>
            <person name="Almeida J.P."/>
            <person name="Ambrose K.D."/>
            <person name="Anderson F."/>
            <person name="Andrew R.W."/>
            <person name="Ashwell R.I.S."/>
            <person name="Aubin K."/>
            <person name="Babbage A.K."/>
            <person name="Bagguley C.L."/>
            <person name="Bailey J."/>
            <person name="Beasley H."/>
            <person name="Bethel G."/>
            <person name="Bird C.P."/>
            <person name="Bray-Allen S."/>
            <person name="Brown J.Y."/>
            <person name="Brown A.J."/>
            <person name="Buckley D."/>
            <person name="Burton J."/>
            <person name="Bye J."/>
            <person name="Carder C."/>
            <person name="Chapman J.C."/>
            <person name="Clark S.Y."/>
            <person name="Clarke G."/>
            <person name="Clee C."/>
            <person name="Cobley V."/>
            <person name="Collier R.E."/>
            <person name="Corby N."/>
            <person name="Coville G.J."/>
            <person name="Davies J."/>
            <person name="Deadman R."/>
            <person name="Dunn M."/>
            <person name="Earthrowl M."/>
            <person name="Ellington A.G."/>
            <person name="Errington H."/>
            <person name="Frankish A."/>
            <person name="Frankland J."/>
            <person name="French L."/>
            <person name="Garner P."/>
            <person name="Garnett J."/>
            <person name="Gay L."/>
            <person name="Ghori M.R.J."/>
            <person name="Gibson R."/>
            <person name="Gilby L.M."/>
            <person name="Gillett W."/>
            <person name="Glithero R.J."/>
            <person name="Grafham D.V."/>
            <person name="Griffiths C."/>
            <person name="Griffiths-Jones S."/>
            <person name="Grocock R."/>
            <person name="Hammond S."/>
            <person name="Harrison E.S.I."/>
            <person name="Hart E."/>
            <person name="Haugen E."/>
            <person name="Heath P.D."/>
            <person name="Holmes S."/>
            <person name="Holt K."/>
            <person name="Howden P.J."/>
            <person name="Hunt A.R."/>
            <person name="Hunt S.E."/>
            <person name="Hunter G."/>
            <person name="Isherwood J."/>
            <person name="James R."/>
            <person name="Johnson C."/>
            <person name="Johnson D."/>
            <person name="Joy A."/>
            <person name="Kay M."/>
            <person name="Kershaw J.K."/>
            <person name="Kibukawa M."/>
            <person name="Kimberley A.M."/>
            <person name="King A."/>
            <person name="Knights A.J."/>
            <person name="Lad H."/>
            <person name="Laird G."/>
            <person name="Lawlor S."/>
            <person name="Leongamornlert D.A."/>
            <person name="Lloyd D.M."/>
            <person name="Loveland J."/>
            <person name="Lovell J."/>
            <person name="Lush M.J."/>
            <person name="Lyne R."/>
            <person name="Martin S."/>
            <person name="Mashreghi-Mohammadi M."/>
            <person name="Matthews L."/>
            <person name="Matthews N.S.W."/>
            <person name="McLaren S."/>
            <person name="Milne S."/>
            <person name="Mistry S."/>
            <person name="Moore M.J.F."/>
            <person name="Nickerson T."/>
            <person name="O'Dell C.N."/>
            <person name="Oliver K."/>
            <person name="Palmeiri A."/>
            <person name="Palmer S.A."/>
            <person name="Parker A."/>
            <person name="Patel D."/>
            <person name="Pearce A.V."/>
            <person name="Peck A.I."/>
            <person name="Pelan S."/>
            <person name="Phelps K."/>
            <person name="Phillimore B.J."/>
            <person name="Plumb R."/>
            <person name="Rajan J."/>
            <person name="Raymond C."/>
            <person name="Rouse G."/>
            <person name="Saenphimmachak C."/>
            <person name="Sehra H.K."/>
            <person name="Sheridan E."/>
            <person name="Shownkeen R."/>
            <person name="Sims S."/>
            <person name="Skuce C.D."/>
            <person name="Smith M."/>
            <person name="Steward C."/>
            <person name="Subramanian S."/>
            <person name="Sycamore N."/>
            <person name="Tracey A."/>
            <person name="Tromans A."/>
            <person name="Van Helmond Z."/>
            <person name="Wall M."/>
            <person name="Wallis J.M."/>
            <person name="White S."/>
            <person name="Whitehead S.L."/>
            <person name="Wilkinson J.E."/>
            <person name="Willey D.L."/>
            <person name="Williams H."/>
            <person name="Wilming L."/>
            <person name="Wray P.W."/>
            <person name="Wu Z."/>
            <person name="Coulson A."/>
            <person name="Vaudin M."/>
            <person name="Sulston J.E."/>
            <person name="Durbin R.M."/>
            <person name="Hubbard T."/>
            <person name="Wooster R."/>
            <person name="Dunham I."/>
            <person name="Carter N.P."/>
            <person name="McVean G."/>
            <person name="Ross M.T."/>
            <person name="Harrow J."/>
            <person name="Olson M.V."/>
            <person name="Beck S."/>
            <person name="Rogers J."/>
            <person name="Bentley D.R."/>
        </authorList>
    </citation>
    <scope>NUCLEOTIDE SEQUENCE [LARGE SCALE GENOMIC DNA]</scope>
</reference>
<reference key="4">
    <citation type="journal article" date="2004" name="Genome Res.">
        <title>The status, quality, and expansion of the NIH full-length cDNA project: the Mammalian Gene Collection (MGC).</title>
        <authorList>
            <consortium name="The MGC Project Team"/>
        </authorList>
    </citation>
    <scope>NUCLEOTIDE SEQUENCE [LARGE SCALE MRNA] (ISOFORMS 1; 3; 4 AND 5)</scope>
    <source>
        <tissue>Brain</tissue>
        <tissue>Testis</tissue>
    </source>
</reference>
<reference key="5">
    <citation type="journal article" date="2009" name="Blood">
        <title>Distinctive localization and opposed roles of vasohibin-1 and vasohibin-2 in the regulation of angiogenesis.</title>
        <authorList>
            <person name="Kimura H."/>
            <person name="Miyashita H."/>
            <person name="Suzuki Y."/>
            <person name="Kobayashi M."/>
            <person name="Watanabe K."/>
            <person name="Sonoda H."/>
            <person name="Ohta H."/>
            <person name="Fujiwara T."/>
            <person name="Shimosegawa T."/>
            <person name="Sato Y."/>
        </authorList>
    </citation>
    <scope>FUNCTION</scope>
    <scope>SUBCELLULAR LOCATION</scope>
</reference>
<reference key="6">
    <citation type="journal article" date="2010" name="J. Cell Sci.">
        <title>Isolation of a small vasohibin-binding protein (SVBP) and its role in vasohibin secretion.</title>
        <authorList>
            <person name="Suzuki Y."/>
            <person name="Kobayashi M."/>
            <person name="Miyashita H."/>
            <person name="Ohta H."/>
            <person name="Sonoda H."/>
            <person name="Sato Y."/>
        </authorList>
    </citation>
    <scope>INTERACTION WITH SVBP</scope>
    <scope>SUBCELLULAR LOCATION</scope>
</reference>
<reference key="7">
    <citation type="journal article" date="2011" name="Sci. Signal.">
        <title>System-wide temporal characterization of the proteome and phosphoproteome of human embryonic stem cell differentiation.</title>
        <authorList>
            <person name="Rigbolt K.T."/>
            <person name="Prokhorova T.A."/>
            <person name="Akimov V."/>
            <person name="Henningsen J."/>
            <person name="Johansen P.T."/>
            <person name="Kratchmarova I."/>
            <person name="Kassem M."/>
            <person name="Mann M."/>
            <person name="Olsen J.V."/>
            <person name="Blagoev B."/>
        </authorList>
    </citation>
    <scope>PHOSPHORYLATION [LARGE SCALE ANALYSIS] AT SER-302</scope>
    <scope>IDENTIFICATION BY MASS SPECTROMETRY [LARGE SCALE ANALYSIS]</scope>
</reference>
<reference key="8">
    <citation type="journal article" date="2016" name="Bioinformatics">
        <title>Vasohibins: new transglutaminase-like cysteine proteases possessing a non-canonical Cys-His-Ser catalytic triad.</title>
        <authorList>
            <person name="Sanchez-Pulido L."/>
            <person name="Ponting C.P."/>
        </authorList>
    </citation>
    <scope>IDENTIFICATION AS A PROTEASE</scope>
    <scope>ACTIVE SITES</scope>
</reference>
<reference key="9">
    <citation type="journal article" date="2017" name="Science">
        <title>Vasohibins encode tubulin detyrosinating activity.</title>
        <authorList>
            <person name="Nieuwenhuis J."/>
            <person name="Adamopoulos A."/>
            <person name="Bleijerveld O.B."/>
            <person name="Mazouzi A."/>
            <person name="Stickel E."/>
            <person name="Celie P."/>
            <person name="Altelaar M."/>
            <person name="Knipscheer P."/>
            <person name="Perrakis A."/>
            <person name="Blomen V.A."/>
            <person name="Brummelkamp T.R."/>
        </authorList>
    </citation>
    <scope>FUNCTION</scope>
    <scope>CATALYTIC ACTIVITY</scope>
    <scope>INTERACTION WITH SVBP</scope>
    <scope>ACTIVE SITE</scope>
    <scope>MUTAGENESIS OF CYS-158</scope>
</reference>
<reference key="10">
    <citation type="journal article" date="2019" name="Cell Res.">
        <title>Molecular basis of vasohibins-mediated detyrosination and its impact on spindle function and mitosis.</title>
        <authorList>
            <person name="Liao S."/>
            <person name="Rajendraprasad G."/>
            <person name="Wang N."/>
            <person name="Eibes S."/>
            <person name="Gao J."/>
            <person name="Yu H."/>
            <person name="Wu G."/>
            <person name="Tu X."/>
            <person name="Huang H."/>
            <person name="Barisic M."/>
            <person name="Xu C."/>
        </authorList>
    </citation>
    <scope>FUNCTION</scope>
</reference>
<reference key="11">
    <citation type="journal article" date="2019" name="Nat. Commun.">
        <title>Structural basis of tubulin detyrosination by VASH2/SVBP heterodimer.</title>
        <authorList>
            <person name="Zhou C."/>
            <person name="Yan L."/>
            <person name="Zhang W.H."/>
            <person name="Liu Z."/>
        </authorList>
    </citation>
    <scope>INTERACTION WITH SVBP</scope>
</reference>
<reference evidence="14" key="12">
    <citation type="journal article" date="2019" name="Nat. Struct. Mol. Biol.">
        <title>Structural basis of tubulin detyrosination by the vasohibin-SVBP enzyme complex.</title>
        <authorList>
            <person name="Wang N."/>
            <person name="Bosc C."/>
            <person name="Ryul Choi S."/>
            <person name="Boulan B."/>
            <person name="Peris L."/>
            <person name="Olieric N."/>
            <person name="Bao H."/>
            <person name="Krichen F."/>
            <person name="Chen L."/>
            <person name="Andrieux A."/>
            <person name="Olieric V."/>
            <person name="Moutin M.J."/>
            <person name="Steinmetz M.O."/>
            <person name="Huang H."/>
        </authorList>
    </citation>
    <scope>X-RAY CRYSTALLOGRAPHY (2.09 ANGSTROMS) OF 48-292 IN COMPLEX WITH SVBP AND TUBULIN PEPTIDE</scope>
    <scope>INTERACTION WITH SVBP</scope>
    <scope>FUNCTION</scope>
    <scope>CATALYTIC ACTIVITY</scope>
    <scope>MUTAGENESIS OF 63-TRP--TRP-67; TYR-123; ARG-134; LYS-135; 154-LEU-PRO-155; LYS-157; CYS-158; HIS-192; HIS-193; SER-210; ARG-211 AND LEU-215</scope>
    <scope>SUBCELLULAR LOCATION</scope>
</reference>
<evidence type="ECO:0000256" key="1">
    <source>
        <dbReference type="SAM" id="MobiDB-lite"/>
    </source>
</evidence>
<evidence type="ECO:0000269" key="2">
    <source>
    </source>
</evidence>
<evidence type="ECO:0000269" key="3">
    <source>
    </source>
</evidence>
<evidence type="ECO:0000269" key="4">
    <source>
    </source>
</evidence>
<evidence type="ECO:0000269" key="5">
    <source>
    </source>
</evidence>
<evidence type="ECO:0000269" key="6">
    <source>
    </source>
</evidence>
<evidence type="ECO:0000269" key="7">
    <source>
    </source>
</evidence>
<evidence type="ECO:0000303" key="8">
    <source>
    </source>
</evidence>
<evidence type="ECO:0000303" key="9">
    <source>
    </source>
</evidence>
<evidence type="ECO:0000303" key="10">
    <source>
    </source>
</evidence>
<evidence type="ECO:0000305" key="11"/>
<evidence type="ECO:0000305" key="12">
    <source>
    </source>
</evidence>
<evidence type="ECO:0000312" key="13">
    <source>
        <dbReference type="HGNC" id="HGNC:25723"/>
    </source>
</evidence>
<evidence type="ECO:0007744" key="14">
    <source>
        <dbReference type="PDB" id="6QBY"/>
    </source>
</evidence>
<evidence type="ECO:0007744" key="15">
    <source>
    </source>
</evidence>
<evidence type="ECO:0007829" key="16">
    <source>
        <dbReference type="PDB" id="6J4P"/>
    </source>
</evidence>
<evidence type="ECO:0007829" key="17">
    <source>
        <dbReference type="PDB" id="6J4S"/>
    </source>
</evidence>
<evidence type="ECO:0007829" key="18">
    <source>
        <dbReference type="PDB" id="6QBY"/>
    </source>
</evidence>
<comment type="function">
    <text evidence="3 5 6">Tyrosine carboxypeptidase that removes the C-terminal tyrosine residue of alpha-tubulin, thereby regulating microtubule dynamics and function (PubMed:29146869). Critical for spindle function and accurate chromosome segregation during mitosis since microtubule detyronisation regulates mitotic spindle length and postioning (PubMed:31171830). Acts as an activator of angiogenesis: expressed in infiltrating mononuclear cells in the sprouting front to promote angiogenesis (PubMed:19204325). Plays a role in axon formation (PubMed:31235911).</text>
</comment>
<comment type="catalytic activity">
    <reaction evidence="5 6">
        <text>C-terminal L-alpha-aminoacyl-L-glutamyl-L-glutamyl-L-tyrosyl-[tubulin] + H2O = C-terminal L-alpha-aminoacyl-L-glutamyl-L-glutamyl-[tubulin] + L-tyrosine</text>
        <dbReference type="Rhea" id="RHEA:57444"/>
        <dbReference type="Rhea" id="RHEA-COMP:16434"/>
        <dbReference type="Rhea" id="RHEA-COMP:16435"/>
        <dbReference type="ChEBI" id="CHEBI:15377"/>
        <dbReference type="ChEBI" id="CHEBI:58315"/>
        <dbReference type="ChEBI" id="CHEBI:149554"/>
        <dbReference type="ChEBI" id="CHEBI:149555"/>
        <dbReference type="EC" id="3.4.17.17"/>
    </reaction>
</comment>
<comment type="subunit">
    <text evidence="4 5 7">Interacts with SVBP; interaction enhances VASH2 tyrosine carboxypeptidase activity.</text>
</comment>
<comment type="subcellular location">
    <subcellularLocation>
        <location evidence="3">Cytoplasm</location>
    </subcellularLocation>
    <subcellularLocation>
        <location evidence="4">Secreted</location>
    </subcellularLocation>
    <subcellularLocation>
        <location evidence="6">Cytoplasm</location>
        <location evidence="6">Cytoskeleton</location>
    </subcellularLocation>
    <text evidence="3 4 6">Mainly localizes in the cytoplasm (PubMed:19204325). Some fraction is secreted via a non-canonical secretion system; interaction with SVBP promotes secretion (PubMed:20736312). Associates with microtubules (PubMed:31235911).</text>
</comment>
<comment type="alternative products">
    <event type="alternative splicing"/>
    <isoform>
        <id>Q86V25-1</id>
        <name>1</name>
        <sequence type="displayed"/>
    </isoform>
    <isoform>
        <id>Q86V25-2</id>
        <name>2</name>
        <sequence type="described" ref="VSP_013328"/>
    </isoform>
    <isoform>
        <id>Q86V25-3</id>
        <name>3</name>
        <sequence type="described" ref="VSP_013329 VSP_013330 VSP_013331"/>
    </isoform>
    <isoform>
        <id>Q86V25-4</id>
        <name>4</name>
        <sequence type="described" ref="VSP_013332 VSP_013333"/>
    </isoform>
    <isoform>
        <id>Q86V25-5</id>
        <name>5</name>
        <sequence type="described" ref="VSP_013334"/>
    </isoform>
    <isoform>
        <id>Q86V25-6</id>
        <name>6</name>
        <sequence type="described" ref="VSP_054104"/>
    </isoform>
</comment>
<comment type="developmental stage">
    <text evidence="2">Expressed in various embryonic organs at 6 to 12 embryonic weeks. Detected in vessels from 20-week embryonic organs as well as in endothelial cells from large vessels in neonate.</text>
</comment>
<comment type="induction">
    <text evidence="2">By VEGF.</text>
</comment>
<comment type="similarity">
    <text evidence="11">Belongs to the transglutaminase-like superfamily. Vasohibin family.</text>
</comment>
<protein>
    <recommendedName>
        <fullName evidence="11">Tubulinyl-Tyr carboxypeptidase 2</fullName>
        <ecNumber evidence="5 6">3.4.17.17</ecNumber>
    </recommendedName>
    <alternativeName>
        <fullName evidence="10">Vasohibin-2</fullName>
    </alternativeName>
    <alternativeName>
        <fullName>Vasohibin-like protein</fullName>
    </alternativeName>
</protein>
<keyword id="KW-0002">3D-structure</keyword>
<keyword id="KW-0025">Alternative splicing</keyword>
<keyword id="KW-0121">Carboxypeptidase</keyword>
<keyword id="KW-0963">Cytoplasm</keyword>
<keyword id="KW-0206">Cytoskeleton</keyword>
<keyword id="KW-0378">Hydrolase</keyword>
<keyword id="KW-0597">Phosphoprotein</keyword>
<keyword id="KW-0645">Protease</keyword>
<keyword id="KW-1267">Proteomics identification</keyword>
<keyword id="KW-1185">Reference proteome</keyword>
<keyword id="KW-0964">Secreted</keyword>
<sequence>MTGSAADTHRCPHPKGAKGTRSRSSHARPVSLATSGGSEEEDKDGGVLFHVNKSGFPIDSHTWERMWMHVAKVHPKGGEMVGAIRNAAFLAKPSIPQVPNYRLSMTIPDWLQAIQNYMKTLQYNHTGTQFFEIRKMRPLSGLMETAKEMTRESLPIKCLEAVILGIYLTNGQPSIERFPISFKTYFSGNYFHHVVLGIYCNGRYGSLGMSRRAELMDKPLTFRTLSDLIFDFEDSYKKYLHTVKKVKIGLYVPHEPHSFQPIEWKQLVLNVSKMLRADIRKELEKYARDMRMKILKPASAHSPTQVRSRGKSLSPRRRQASPPRRLGRREKSPALPEKKVADLSTLNEVGYQIRI</sequence>
<dbReference type="EC" id="3.4.17.17" evidence="5 6"/>
<dbReference type="EMBL" id="AY834202">
    <property type="protein sequence ID" value="AAX39752.1"/>
    <property type="molecule type" value="mRNA"/>
</dbReference>
<dbReference type="EMBL" id="AK022567">
    <property type="protein sequence ID" value="BAB14103.1"/>
    <property type="molecule type" value="mRNA"/>
</dbReference>
<dbReference type="EMBL" id="AK302675">
    <property type="protein sequence ID" value="BAG63907.1"/>
    <property type="molecule type" value="mRNA"/>
</dbReference>
<dbReference type="EMBL" id="AL592449">
    <property type="status" value="NOT_ANNOTATED_CDS"/>
    <property type="molecule type" value="Genomic_DNA"/>
</dbReference>
<dbReference type="EMBL" id="BC028194">
    <property type="protein sequence ID" value="AAH28194.1"/>
    <property type="molecule type" value="mRNA"/>
</dbReference>
<dbReference type="EMBL" id="BC051856">
    <property type="protein sequence ID" value="AAH51856.1"/>
    <property type="molecule type" value="mRNA"/>
</dbReference>
<dbReference type="EMBL" id="BC053836">
    <property type="protein sequence ID" value="AAH53836.1"/>
    <property type="molecule type" value="mRNA"/>
</dbReference>
<dbReference type="CCDS" id="CCDS1511.1">
    <molecule id="Q86V25-5"/>
</dbReference>
<dbReference type="CCDS" id="CCDS44315.1">
    <molecule id="Q86V25-2"/>
</dbReference>
<dbReference type="CCDS" id="CCDS44316.1">
    <molecule id="Q86V25-6"/>
</dbReference>
<dbReference type="CCDS" id="CCDS73026.1">
    <molecule id="Q86V25-1"/>
</dbReference>
<dbReference type="RefSeq" id="NP_001129946.1">
    <molecule id="Q86V25-2"/>
    <property type="nucleotide sequence ID" value="NM_001136474.3"/>
</dbReference>
<dbReference type="RefSeq" id="NP_001129947.1">
    <molecule id="Q86V25-6"/>
    <property type="nucleotide sequence ID" value="NM_001136475.3"/>
</dbReference>
<dbReference type="RefSeq" id="NP_001287985.1">
    <molecule id="Q86V25-1"/>
    <property type="nucleotide sequence ID" value="NM_001301056.2"/>
</dbReference>
<dbReference type="RefSeq" id="NP_079025.2">
    <molecule id="Q86V25-5"/>
    <property type="nucleotide sequence ID" value="NM_024749.4"/>
</dbReference>
<dbReference type="RefSeq" id="XP_011508289.1">
    <property type="nucleotide sequence ID" value="XM_011509987.2"/>
</dbReference>
<dbReference type="RefSeq" id="XP_011508290.1">
    <property type="nucleotide sequence ID" value="XM_011509988.2"/>
</dbReference>
<dbReference type="RefSeq" id="XP_016857840.1">
    <property type="nucleotide sequence ID" value="XM_017002351.1"/>
</dbReference>
<dbReference type="PDB" id="6J4O">
    <property type="method" value="X-ray"/>
    <property type="resolution" value="2.30 A"/>
    <property type="chains" value="A=46-296"/>
</dbReference>
<dbReference type="PDB" id="6J4P">
    <property type="method" value="X-ray"/>
    <property type="resolution" value="1.60 A"/>
    <property type="chains" value="A=46-296"/>
</dbReference>
<dbReference type="PDB" id="6J4Q">
    <property type="method" value="X-ray"/>
    <property type="resolution" value="2.70 A"/>
    <property type="chains" value="A/C/F/J=46-296"/>
</dbReference>
<dbReference type="PDB" id="6J4S">
    <property type="method" value="X-ray"/>
    <property type="resolution" value="2.80 A"/>
    <property type="chains" value="A=1-355"/>
</dbReference>
<dbReference type="PDB" id="6J4V">
    <property type="method" value="X-ray"/>
    <property type="resolution" value="2.10 A"/>
    <property type="chains" value="A=46-296"/>
</dbReference>
<dbReference type="PDB" id="6QBY">
    <property type="method" value="X-ray"/>
    <property type="resolution" value="2.09 A"/>
    <property type="chains" value="A/C=40-295"/>
</dbReference>
<dbReference type="PDB" id="7ZCW">
    <property type="method" value="EM"/>
    <property type="resolution" value="3.60 A"/>
    <property type="chains" value="C=1-355"/>
</dbReference>
<dbReference type="PDBsum" id="6J4O"/>
<dbReference type="PDBsum" id="6J4P"/>
<dbReference type="PDBsum" id="6J4Q"/>
<dbReference type="PDBsum" id="6J4S"/>
<dbReference type="PDBsum" id="6J4V"/>
<dbReference type="PDBsum" id="6QBY"/>
<dbReference type="PDBsum" id="7ZCW"/>
<dbReference type="EMDB" id="EMD-14634"/>
<dbReference type="SMR" id="Q86V25"/>
<dbReference type="BioGRID" id="122902">
    <property type="interactions" value="13"/>
</dbReference>
<dbReference type="FunCoup" id="Q86V25">
    <property type="interactions" value="1070"/>
</dbReference>
<dbReference type="IntAct" id="Q86V25">
    <property type="interactions" value="11"/>
</dbReference>
<dbReference type="STRING" id="9606.ENSP00000428324"/>
<dbReference type="GlyGen" id="Q86V25">
    <property type="glycosylation" value="2 sites, 1 O-linked glycan (2 sites)"/>
</dbReference>
<dbReference type="iPTMnet" id="Q86V25"/>
<dbReference type="PhosphoSitePlus" id="Q86V25"/>
<dbReference type="BioMuta" id="VASH2"/>
<dbReference type="jPOST" id="Q86V25"/>
<dbReference type="MassIVE" id="Q86V25"/>
<dbReference type="PaxDb" id="9606-ENSP00000428324"/>
<dbReference type="PeptideAtlas" id="Q86V25"/>
<dbReference type="ProteomicsDB" id="5557"/>
<dbReference type="ProteomicsDB" id="69954">
    <molecule id="Q86V25-1"/>
</dbReference>
<dbReference type="ProteomicsDB" id="69955">
    <molecule id="Q86V25-2"/>
</dbReference>
<dbReference type="ProteomicsDB" id="69956">
    <molecule id="Q86V25-3"/>
</dbReference>
<dbReference type="ProteomicsDB" id="69957">
    <molecule id="Q86V25-4"/>
</dbReference>
<dbReference type="ProteomicsDB" id="69958">
    <molecule id="Q86V25-5"/>
</dbReference>
<dbReference type="Antibodypedia" id="47116">
    <property type="antibodies" value="146 antibodies from 22 providers"/>
</dbReference>
<dbReference type="DNASU" id="79805"/>
<dbReference type="Ensembl" id="ENST00000366964.7">
    <molecule id="Q86V25-4"/>
    <property type="protein sequence ID" value="ENSP00000355931.4"/>
    <property type="gene ID" value="ENSG00000143494.16"/>
</dbReference>
<dbReference type="Ensembl" id="ENST00000366965.6">
    <molecule id="Q86V25-5"/>
    <property type="protein sequence ID" value="ENSP00000355932.2"/>
    <property type="gene ID" value="ENSG00000143494.16"/>
</dbReference>
<dbReference type="Ensembl" id="ENST00000366966.6">
    <molecule id="Q86V25-2"/>
    <property type="protein sequence ID" value="ENSP00000430319.1"/>
    <property type="gene ID" value="ENSG00000143494.16"/>
</dbReference>
<dbReference type="Ensembl" id="ENST00000366967.6">
    <molecule id="Q86V25-6"/>
    <property type="protein sequence ID" value="ENSP00000429040.1"/>
    <property type="gene ID" value="ENSG00000143494.16"/>
</dbReference>
<dbReference type="Ensembl" id="ENST00000366968.8">
    <molecule id="Q86V25-2"/>
    <property type="protein sequence ID" value="ENSP00000355935.4"/>
    <property type="gene ID" value="ENSG00000143494.16"/>
</dbReference>
<dbReference type="Ensembl" id="ENST00000517399.3">
    <molecule id="Q86V25-1"/>
    <property type="protein sequence ID" value="ENSP00000428324.1"/>
    <property type="gene ID" value="ENSG00000143494.16"/>
</dbReference>
<dbReference type="GeneID" id="79805"/>
<dbReference type="KEGG" id="hsa:79805"/>
<dbReference type="MANE-Select" id="ENST00000517399.3">
    <property type="protein sequence ID" value="ENSP00000428324.1"/>
    <property type="RefSeq nucleotide sequence ID" value="NM_001301056.2"/>
    <property type="RefSeq protein sequence ID" value="NP_001287985.1"/>
</dbReference>
<dbReference type="UCSC" id="uc001hju.3">
    <molecule id="Q86V25-1"/>
    <property type="organism name" value="human"/>
</dbReference>
<dbReference type="AGR" id="HGNC:25723"/>
<dbReference type="CTD" id="79805"/>
<dbReference type="DisGeNET" id="79805"/>
<dbReference type="GeneCards" id="VASH2"/>
<dbReference type="HGNC" id="HGNC:25723">
    <property type="gene designation" value="VASH2"/>
</dbReference>
<dbReference type="HPA" id="ENSG00000143494">
    <property type="expression patterns" value="Tissue enhanced (testis)"/>
</dbReference>
<dbReference type="MIM" id="610471">
    <property type="type" value="gene"/>
</dbReference>
<dbReference type="neXtProt" id="NX_Q86V25"/>
<dbReference type="OpenTargets" id="ENSG00000143494"/>
<dbReference type="PharmGKB" id="PA145147736"/>
<dbReference type="VEuPathDB" id="HostDB:ENSG00000143494"/>
<dbReference type="eggNOG" id="ENOG502QPPX">
    <property type="taxonomic scope" value="Eukaryota"/>
</dbReference>
<dbReference type="GeneTree" id="ENSGT00390000012703"/>
<dbReference type="HOGENOM" id="CLU_1577966_0_0_1"/>
<dbReference type="InParanoid" id="Q86V25"/>
<dbReference type="OMA" id="WERMWAH"/>
<dbReference type="OrthoDB" id="9974232at2759"/>
<dbReference type="PAN-GO" id="Q86V25">
    <property type="GO annotations" value="2 GO annotations based on evolutionary models"/>
</dbReference>
<dbReference type="PhylomeDB" id="Q86V25"/>
<dbReference type="TreeFam" id="TF329370"/>
<dbReference type="PathwayCommons" id="Q86V25"/>
<dbReference type="Reactome" id="R-HSA-8955332">
    <property type="pathway name" value="Carboxyterminal post-translational modifications of tubulin"/>
</dbReference>
<dbReference type="SignaLink" id="Q86V25"/>
<dbReference type="BioGRID-ORCS" id="79805">
    <property type="hits" value="12 hits in 1147 CRISPR screens"/>
</dbReference>
<dbReference type="GenomeRNAi" id="79805"/>
<dbReference type="Pharos" id="Q86V25">
    <property type="development level" value="Tbio"/>
</dbReference>
<dbReference type="PRO" id="PR:Q86V25"/>
<dbReference type="Proteomes" id="UP000005640">
    <property type="component" value="Chromosome 1"/>
</dbReference>
<dbReference type="RNAct" id="Q86V25">
    <property type="molecule type" value="protein"/>
</dbReference>
<dbReference type="Bgee" id="ENSG00000143494">
    <property type="expression patterns" value="Expressed in cortical plate and 116 other cell types or tissues"/>
</dbReference>
<dbReference type="ExpressionAtlas" id="Q86V25">
    <property type="expression patterns" value="baseline and differential"/>
</dbReference>
<dbReference type="GO" id="GO:0005737">
    <property type="term" value="C:cytoplasm"/>
    <property type="evidence" value="ECO:0000314"/>
    <property type="project" value="MGI"/>
</dbReference>
<dbReference type="GO" id="GO:0005856">
    <property type="term" value="C:cytoskeleton"/>
    <property type="evidence" value="ECO:0007669"/>
    <property type="project" value="UniProtKB-SubCell"/>
</dbReference>
<dbReference type="GO" id="GO:0005829">
    <property type="term" value="C:cytosol"/>
    <property type="evidence" value="ECO:0000314"/>
    <property type="project" value="HPA"/>
</dbReference>
<dbReference type="GO" id="GO:0005576">
    <property type="term" value="C:extracellular region"/>
    <property type="evidence" value="ECO:0007669"/>
    <property type="project" value="UniProtKB-SubCell"/>
</dbReference>
<dbReference type="GO" id="GO:0003779">
    <property type="term" value="F:actin binding"/>
    <property type="evidence" value="ECO:0000314"/>
    <property type="project" value="UniProtKB"/>
</dbReference>
<dbReference type="GO" id="GO:0004181">
    <property type="term" value="F:metallocarboxypeptidase activity"/>
    <property type="evidence" value="ECO:0000314"/>
    <property type="project" value="UniProtKB"/>
</dbReference>
<dbReference type="GO" id="GO:0008017">
    <property type="term" value="F:microtubule binding"/>
    <property type="evidence" value="ECO:0000314"/>
    <property type="project" value="UniProtKB"/>
</dbReference>
<dbReference type="GO" id="GO:0106423">
    <property type="term" value="F:tubulin-tyrosine carboxypeptidase"/>
    <property type="evidence" value="ECO:0007669"/>
    <property type="project" value="UniProtKB-EC"/>
</dbReference>
<dbReference type="GO" id="GO:0061564">
    <property type="term" value="P:axon development"/>
    <property type="evidence" value="ECO:0000315"/>
    <property type="project" value="UniProtKB"/>
</dbReference>
<dbReference type="GO" id="GO:0140253">
    <property type="term" value="P:cell-cell fusion"/>
    <property type="evidence" value="ECO:0000314"/>
    <property type="project" value="MGI"/>
</dbReference>
<dbReference type="GO" id="GO:0060716">
    <property type="term" value="P:labyrinthine layer blood vessel development"/>
    <property type="evidence" value="ECO:0007669"/>
    <property type="project" value="Ensembl"/>
</dbReference>
<dbReference type="GO" id="GO:0045766">
    <property type="term" value="P:positive regulation of angiogenesis"/>
    <property type="evidence" value="ECO:0000314"/>
    <property type="project" value="MGI"/>
</dbReference>
<dbReference type="GO" id="GO:0001938">
    <property type="term" value="P:positive regulation of endothelial cell proliferation"/>
    <property type="evidence" value="ECO:0000314"/>
    <property type="project" value="MGI"/>
</dbReference>
<dbReference type="GO" id="GO:0006508">
    <property type="term" value="P:proteolysis"/>
    <property type="evidence" value="ECO:0000314"/>
    <property type="project" value="UniProtKB"/>
</dbReference>
<dbReference type="GO" id="GO:0045765">
    <property type="term" value="P:regulation of angiogenesis"/>
    <property type="evidence" value="ECO:0000318"/>
    <property type="project" value="GO_Central"/>
</dbReference>
<dbReference type="GO" id="GO:0000768">
    <property type="term" value="P:syncytium formation by plasma membrane fusion"/>
    <property type="evidence" value="ECO:0007669"/>
    <property type="project" value="Ensembl"/>
</dbReference>
<dbReference type="InterPro" id="IPR028131">
    <property type="entry name" value="VASH1"/>
</dbReference>
<dbReference type="PANTHER" id="PTHR15750:SF4">
    <property type="entry name" value="TUBULINYL-TYR CARBOXYPEPTIDASE 2"/>
    <property type="match status" value="1"/>
</dbReference>
<dbReference type="PANTHER" id="PTHR15750">
    <property type="entry name" value="VASOHIBIN-1-LIKE ISOFORM X2"/>
    <property type="match status" value="1"/>
</dbReference>
<dbReference type="Pfam" id="PF14822">
    <property type="entry name" value="Vasohibin"/>
    <property type="match status" value="1"/>
</dbReference>
<accession>Q86V25</accession>
<accession>B4DYZ5</accession>
<accession>Q2VT46</accession>
<accession>Q5VTE7</accession>
<accession>Q5VTE9</accession>
<accession>Q7Z6E3</accession>
<accession>Q8IZ24</accession>
<accession>Q9H9W5</accession>
<name>VASH2_HUMAN</name>
<feature type="chain" id="PRO_0000189982" description="Tubulinyl-Tyr carboxypeptidase 2">
    <location>
        <begin position="1"/>
        <end position="355"/>
    </location>
</feature>
<feature type="region of interest" description="Disordered" evidence="1">
    <location>
        <begin position="1"/>
        <end position="45"/>
    </location>
</feature>
<feature type="region of interest" description="Disordered" evidence="1">
    <location>
        <begin position="297"/>
        <end position="337"/>
    </location>
</feature>
<feature type="compositionally biased region" description="Basic residues" evidence="1">
    <location>
        <begin position="11"/>
        <end position="26"/>
    </location>
</feature>
<feature type="compositionally biased region" description="Basic residues" evidence="1">
    <location>
        <begin position="308"/>
        <end position="319"/>
    </location>
</feature>
<feature type="active site" evidence="5 12">
    <location>
        <position position="158"/>
    </location>
</feature>
<feature type="active site" evidence="12">
    <location>
        <position position="193"/>
    </location>
</feature>
<feature type="active site" evidence="12">
    <location>
        <position position="210"/>
    </location>
</feature>
<feature type="modified residue" description="Phosphoserine" evidence="15">
    <location>
        <position position="302"/>
    </location>
</feature>
<feature type="splice variant" id="VSP_013329" description="In isoform 3." evidence="9">
    <location>
        <begin position="1"/>
        <end position="142"/>
    </location>
</feature>
<feature type="splice variant" id="VSP_054104" description="In isoform 6." evidence="8">
    <location>
        <begin position="1"/>
        <end position="104"/>
    </location>
</feature>
<feature type="splice variant" id="VSP_013328" description="In isoform 2." evidence="8">
    <location>
        <begin position="1"/>
        <end position="65"/>
    </location>
</feature>
<feature type="splice variant" id="VSP_013334" description="In isoform 5." evidence="9">
    <original>QYNHTGTQFFEIRKMRPLSGLMETAKEMTRESLPIKCLEAVILGI</original>
    <variation>H</variation>
    <location>
        <begin position="122"/>
        <end position="166"/>
    </location>
</feature>
<feature type="splice variant" id="VSP_013332" description="In isoform 4." evidence="9">
    <original>YLT</original>
    <variation>THS</variation>
    <location>
        <begin position="167"/>
        <end position="169"/>
    </location>
</feature>
<feature type="splice variant" id="VSP_013333" description="In isoform 4." evidence="9">
    <location>
        <begin position="170"/>
        <end position="355"/>
    </location>
</feature>
<feature type="splice variant" id="VSP_013330" description="In isoform 3." evidence="9">
    <original>ILKPA</original>
    <variation>GLCSH</variation>
    <location>
        <begin position="294"/>
        <end position="298"/>
    </location>
</feature>
<feature type="splice variant" id="VSP_013331" description="In isoform 3." evidence="9">
    <location>
        <begin position="299"/>
        <end position="355"/>
    </location>
</feature>
<feature type="mutagenesis site" description="Disrupted interaction with SVBP. Reduced tyrosine carboxypeptidase activity." evidence="6">
    <original>WERMW</original>
    <variation>EERME</variation>
    <location>
        <begin position="63"/>
        <end position="67"/>
    </location>
</feature>
<feature type="mutagenesis site" description="Reduced tyrosine carboxypeptidase activity." evidence="6">
    <original>Y</original>
    <variation>A</variation>
    <location>
        <position position="123"/>
    </location>
</feature>
<feature type="mutagenesis site" description="Slightly reduced tyrosine carboxypeptidase activity." evidence="6">
    <original>R</original>
    <variation>A</variation>
    <location>
        <position position="134"/>
    </location>
</feature>
<feature type="mutagenesis site" description="Reduced tyrosine carboxypeptidase activity." evidence="6">
    <original>K</original>
    <variation>A</variation>
    <location>
        <position position="135"/>
    </location>
</feature>
<feature type="mutagenesis site" description="Disrupted interaction with SVBP. Reduced tyrosine carboxypeptidase activity." evidence="6">
    <original>LP</original>
    <variation>EE</variation>
    <location>
        <begin position="154"/>
        <end position="155"/>
    </location>
</feature>
<feature type="mutagenesis site" description="Reduced tyrosine carboxypeptidase activity." evidence="6">
    <original>K</original>
    <variation>A</variation>
    <location>
        <position position="157"/>
    </location>
</feature>
<feature type="mutagenesis site" description="Abolished tyrosine carboxypeptidase activity. No effect on binding to microtubule." evidence="5 6">
    <original>C</original>
    <variation>A</variation>
    <location>
        <position position="158"/>
    </location>
</feature>
<feature type="mutagenesis site" description="No effect on tyrosine carboxypeptidase activity." evidence="6">
    <original>H</original>
    <variation>A</variation>
    <location>
        <position position="192"/>
    </location>
</feature>
<feature type="mutagenesis site" description="Strongly reduced tyrosine carboxypeptidase activity." evidence="6">
    <original>H</original>
    <variation>A</variation>
    <location>
        <position position="193"/>
    </location>
</feature>
<feature type="mutagenesis site" description="Reduced tyrosine carboxypeptidase activity." evidence="6">
    <original>S</original>
    <variation>A</variation>
    <location>
        <position position="210"/>
    </location>
</feature>
<feature type="mutagenesis site" description="Reduced tyrosine carboxypeptidase activity." evidence="6">
    <original>R</original>
    <variation>A</variation>
    <variation>H</variation>
    <location>
        <position position="211"/>
    </location>
</feature>
<feature type="mutagenesis site" description="Slightly reduced tyrosine carboxypeptidase activity." evidence="6">
    <original>L</original>
    <variation>A</variation>
    <location>
        <position position="215"/>
    </location>
</feature>
<feature type="helix" evidence="16">
    <location>
        <begin position="60"/>
        <end position="73"/>
    </location>
</feature>
<feature type="strand" evidence="17">
    <location>
        <begin position="74"/>
        <end position="76"/>
    </location>
</feature>
<feature type="helix" evidence="16">
    <location>
        <begin position="77"/>
        <end position="85"/>
    </location>
</feature>
<feature type="helix" evidence="16">
    <location>
        <begin position="107"/>
        <end position="121"/>
    </location>
</feature>
<feature type="strand" evidence="16">
    <location>
        <begin position="126"/>
        <end position="131"/>
    </location>
</feature>
<feature type="helix" evidence="16">
    <location>
        <begin position="139"/>
        <end position="152"/>
    </location>
</feature>
<feature type="helix" evidence="16">
    <location>
        <begin position="158"/>
        <end position="169"/>
    </location>
</feature>
<feature type="strand" evidence="16">
    <location>
        <begin position="175"/>
        <end position="186"/>
    </location>
</feature>
<feature type="strand" evidence="16">
    <location>
        <begin position="189"/>
        <end position="200"/>
    </location>
</feature>
<feature type="strand" evidence="16">
    <location>
        <begin position="203"/>
        <end position="207"/>
    </location>
</feature>
<feature type="helix" evidence="16">
    <location>
        <begin position="213"/>
        <end position="215"/>
    </location>
</feature>
<feature type="strand" evidence="16">
    <location>
        <begin position="218"/>
        <end position="224"/>
    </location>
</feature>
<feature type="helix" evidence="16">
    <location>
        <begin position="225"/>
        <end position="238"/>
    </location>
</feature>
<feature type="strand" evidence="16">
    <location>
        <begin position="242"/>
        <end position="248"/>
    </location>
</feature>
<feature type="strand" evidence="16">
    <location>
        <begin position="266"/>
        <end position="270"/>
    </location>
</feature>
<feature type="turn" evidence="18">
    <location>
        <begin position="271"/>
        <end position="273"/>
    </location>
</feature>
<feature type="helix" evidence="16">
    <location>
        <begin position="276"/>
        <end position="292"/>
    </location>
</feature>
<proteinExistence type="evidence at protein level"/>
<organism>
    <name type="scientific">Homo sapiens</name>
    <name type="common">Human</name>
    <dbReference type="NCBI Taxonomy" id="9606"/>
    <lineage>
        <taxon>Eukaryota</taxon>
        <taxon>Metazoa</taxon>
        <taxon>Chordata</taxon>
        <taxon>Craniata</taxon>
        <taxon>Vertebrata</taxon>
        <taxon>Euteleostomi</taxon>
        <taxon>Mammalia</taxon>
        <taxon>Eutheria</taxon>
        <taxon>Euarchontoglires</taxon>
        <taxon>Primates</taxon>
        <taxon>Haplorrhini</taxon>
        <taxon>Catarrhini</taxon>
        <taxon>Hominidae</taxon>
        <taxon>Homo</taxon>
    </lineage>
</organism>
<gene>
    <name evidence="13" type="primary">VASH2</name>
    <name type="synonym">VASHL</name>
</gene>